<reference key="1">
    <citation type="journal article" date="1999" name="Nat. Genet.">
        <title>Comparative genomes of Chlamydia pneumoniae and C. trachomatis.</title>
        <authorList>
            <person name="Kalman S."/>
            <person name="Mitchell W.P."/>
            <person name="Marathe R."/>
            <person name="Lammel C.J."/>
            <person name="Fan J."/>
            <person name="Hyman R.W."/>
            <person name="Olinger L."/>
            <person name="Grimwood J."/>
            <person name="Davis R.W."/>
            <person name="Stephens R.S."/>
        </authorList>
    </citation>
    <scope>NUCLEOTIDE SEQUENCE [LARGE SCALE GENOMIC DNA]</scope>
    <source>
        <strain>CWL029</strain>
    </source>
</reference>
<reference key="2">
    <citation type="journal article" date="2000" name="Nucleic Acids Res.">
        <title>Genome sequences of Chlamydia trachomatis MoPn and Chlamydia pneumoniae AR39.</title>
        <authorList>
            <person name="Read T.D."/>
            <person name="Brunham R.C."/>
            <person name="Shen C."/>
            <person name="Gill S.R."/>
            <person name="Heidelberg J.F."/>
            <person name="White O."/>
            <person name="Hickey E.K."/>
            <person name="Peterson J.D."/>
            <person name="Utterback T.R."/>
            <person name="Berry K.J."/>
            <person name="Bass S."/>
            <person name="Linher K.D."/>
            <person name="Weidman J.F."/>
            <person name="Khouri H.M."/>
            <person name="Craven B."/>
            <person name="Bowman C."/>
            <person name="Dodson R.J."/>
            <person name="Gwinn M.L."/>
            <person name="Nelson W.C."/>
            <person name="DeBoy R.T."/>
            <person name="Kolonay J.F."/>
            <person name="McClarty G."/>
            <person name="Salzberg S.L."/>
            <person name="Eisen J.A."/>
            <person name="Fraser C.M."/>
        </authorList>
    </citation>
    <scope>NUCLEOTIDE SEQUENCE [LARGE SCALE GENOMIC DNA]</scope>
    <source>
        <strain>AR39</strain>
    </source>
</reference>
<reference key="3">
    <citation type="journal article" date="2000" name="Nucleic Acids Res.">
        <title>Comparison of whole genome sequences of Chlamydia pneumoniae J138 from Japan and CWL029 from USA.</title>
        <authorList>
            <person name="Shirai M."/>
            <person name="Hirakawa H."/>
            <person name="Kimoto M."/>
            <person name="Tabuchi M."/>
            <person name="Kishi F."/>
            <person name="Ouchi K."/>
            <person name="Shiba T."/>
            <person name="Ishii K."/>
            <person name="Hattori M."/>
            <person name="Kuhara S."/>
            <person name="Nakazawa T."/>
        </authorList>
    </citation>
    <scope>NUCLEOTIDE SEQUENCE [LARGE SCALE GENOMIC DNA]</scope>
    <source>
        <strain>J138</strain>
    </source>
</reference>
<reference key="4">
    <citation type="submission" date="2002-05" db="EMBL/GenBank/DDBJ databases">
        <title>The genome sequence of Chlamydia pneumoniae TW183 and comparison with other Chlamydia strains based on whole genome sequence analysis.</title>
        <authorList>
            <person name="Geng M.M."/>
            <person name="Schuhmacher A."/>
            <person name="Muehldorfer I."/>
            <person name="Bensch K.W."/>
            <person name="Schaefer K.P."/>
            <person name="Schneider S."/>
            <person name="Pohl T."/>
            <person name="Essig A."/>
            <person name="Marre R."/>
            <person name="Melchers K."/>
        </authorList>
    </citation>
    <scope>NUCLEOTIDE SEQUENCE [LARGE SCALE GENOMIC DNA]</scope>
    <source>
        <strain>TW-183</strain>
    </source>
</reference>
<dbReference type="EMBL" id="AE001363">
    <property type="protein sequence ID" value="AAD18942.1"/>
    <property type="molecule type" value="Genomic_DNA"/>
</dbReference>
<dbReference type="EMBL" id="AE002161">
    <property type="protein sequence ID" value="AAF38839.1"/>
    <property type="molecule type" value="Genomic_DNA"/>
</dbReference>
<dbReference type="EMBL" id="BA000008">
    <property type="protein sequence ID" value="BAA99012.1"/>
    <property type="molecule type" value="Genomic_DNA"/>
</dbReference>
<dbReference type="EMBL" id="AE009440">
    <property type="protein sequence ID" value="AAP98762.1"/>
    <property type="molecule type" value="Genomic_DNA"/>
</dbReference>
<dbReference type="PIR" id="B86591">
    <property type="entry name" value="B86591"/>
</dbReference>
<dbReference type="PIR" id="E72034">
    <property type="entry name" value="E72034"/>
</dbReference>
<dbReference type="RefSeq" id="NP_224999.1">
    <property type="nucleotide sequence ID" value="NC_000922.1"/>
</dbReference>
<dbReference type="RefSeq" id="WP_010883441.1">
    <property type="nucleotide sequence ID" value="NZ_LN847257.1"/>
</dbReference>
<dbReference type="SMR" id="Q9Z7A2"/>
<dbReference type="STRING" id="406984.CPK_ORF00212"/>
<dbReference type="GeneID" id="45050859"/>
<dbReference type="KEGG" id="cpa:CP_1067"/>
<dbReference type="KEGG" id="cpj:gp6D"/>
<dbReference type="KEGG" id="cpn:CPn_0804"/>
<dbReference type="KEGG" id="cpt:CpB0833"/>
<dbReference type="PATRIC" id="fig|115713.3.peg.883"/>
<dbReference type="eggNOG" id="ENOG502ZBXP">
    <property type="taxonomic scope" value="Bacteria"/>
</dbReference>
<dbReference type="HOGENOM" id="CLU_1109868_0_0_0"/>
<dbReference type="OMA" id="AWLLITY"/>
<dbReference type="OrthoDB" id="20802at2"/>
<dbReference type="Proteomes" id="UP000000583">
    <property type="component" value="Chromosome"/>
</dbReference>
<dbReference type="Proteomes" id="UP000000801">
    <property type="component" value="Chromosome"/>
</dbReference>
<dbReference type="InterPro" id="IPR005350">
    <property type="entry name" value="UPF0137"/>
</dbReference>
<dbReference type="Pfam" id="PF03677">
    <property type="entry name" value="UPF0137"/>
    <property type="match status" value="1"/>
</dbReference>
<accession>Q9Z7A2</accession>
<proteinExistence type="inferred from homology"/>
<evidence type="ECO:0000305" key="1"/>
<sequence length="250" mass="29146">MGNLKTLLESRFKKNTPTKMEALARKRMEGDPSPLAVRLSNPTLSSKEKEQLRHLLQHYNFREQIEEPDLTQLCTLSAEVKQIHHQSVLLHGERITKVRDLLKSYREGAFSSWLLLTYGNRQTPYNFLVYYELFTLLPEPLKIEMEKMPRQAVYTLASRQGPQEKKEEIIRNYRGERKSELLDRIRKEFPLVETDCRKTSPVKQALAMLTKGSQILTKCTSLSSDEQIILEKLIKKLEKVKSNLFPDTKV</sequence>
<gene>
    <name type="ordered locus">CPn_0804</name>
    <name type="ordered locus">CP_1067</name>
    <name type="ordered locus">CpB0833</name>
</gene>
<feature type="chain" id="PRO_0000220778" description="Virulence plasmid protein pGP6-D-related protein">
    <location>
        <begin position="1"/>
        <end position="250"/>
    </location>
</feature>
<name>GP6R_CHLPN</name>
<organism>
    <name type="scientific">Chlamydia pneumoniae</name>
    <name type="common">Chlamydophila pneumoniae</name>
    <dbReference type="NCBI Taxonomy" id="83558"/>
    <lineage>
        <taxon>Bacteria</taxon>
        <taxon>Pseudomonadati</taxon>
        <taxon>Chlamydiota</taxon>
        <taxon>Chlamydiia</taxon>
        <taxon>Chlamydiales</taxon>
        <taxon>Chlamydiaceae</taxon>
        <taxon>Chlamydia/Chlamydophila group</taxon>
        <taxon>Chlamydia</taxon>
    </lineage>
</organism>
<comment type="similarity">
    <text evidence="1">Belongs to the UPF0137 (pGP6-D) family.</text>
</comment>
<protein>
    <recommendedName>
        <fullName>Virulence plasmid protein pGP6-D-related protein</fullName>
    </recommendedName>
</protein>